<reference key="1">
    <citation type="journal article" date="1997" name="Hum. Genet.">
        <title>The human histone gene cluster at the D6S105 locus.</title>
        <authorList>
            <person name="Albig W."/>
            <person name="Doenecke D."/>
        </authorList>
    </citation>
    <scope>NUCLEOTIDE SEQUENCE [GENOMIC DNA]</scope>
</reference>
<reference key="2">
    <citation type="journal article" date="2002" name="Genomics">
        <title>The human and mouse replication-dependent histone genes.</title>
        <authorList>
            <person name="Marzluff W.F."/>
            <person name="Gongidi P."/>
            <person name="Woods K.R."/>
            <person name="Jin J."/>
            <person name="Maltais L.J."/>
        </authorList>
    </citation>
    <scope>NUCLEOTIDE SEQUENCE [GENOMIC DNA]</scope>
</reference>
<reference key="3">
    <citation type="journal article" date="2003" name="Nature">
        <title>The DNA sequence and analysis of human chromosome 6.</title>
        <authorList>
            <person name="Mungall A.J."/>
            <person name="Palmer S.A."/>
            <person name="Sims S.K."/>
            <person name="Edwards C.A."/>
            <person name="Ashurst J.L."/>
            <person name="Wilming L."/>
            <person name="Jones M.C."/>
            <person name="Horton R."/>
            <person name="Hunt S.E."/>
            <person name="Scott C.E."/>
            <person name="Gilbert J.G.R."/>
            <person name="Clamp M.E."/>
            <person name="Bethel G."/>
            <person name="Milne S."/>
            <person name="Ainscough R."/>
            <person name="Almeida J.P."/>
            <person name="Ambrose K.D."/>
            <person name="Andrews T.D."/>
            <person name="Ashwell R.I.S."/>
            <person name="Babbage A.K."/>
            <person name="Bagguley C.L."/>
            <person name="Bailey J."/>
            <person name="Banerjee R."/>
            <person name="Barker D.J."/>
            <person name="Barlow K.F."/>
            <person name="Bates K."/>
            <person name="Beare D.M."/>
            <person name="Beasley H."/>
            <person name="Beasley O."/>
            <person name="Bird C.P."/>
            <person name="Blakey S.E."/>
            <person name="Bray-Allen S."/>
            <person name="Brook J."/>
            <person name="Brown A.J."/>
            <person name="Brown J.Y."/>
            <person name="Burford D.C."/>
            <person name="Burrill W."/>
            <person name="Burton J."/>
            <person name="Carder C."/>
            <person name="Carter N.P."/>
            <person name="Chapman J.C."/>
            <person name="Clark S.Y."/>
            <person name="Clark G."/>
            <person name="Clee C.M."/>
            <person name="Clegg S."/>
            <person name="Cobley V."/>
            <person name="Collier R.E."/>
            <person name="Collins J.E."/>
            <person name="Colman L.K."/>
            <person name="Corby N.R."/>
            <person name="Coville G.J."/>
            <person name="Culley K.M."/>
            <person name="Dhami P."/>
            <person name="Davies J."/>
            <person name="Dunn M."/>
            <person name="Earthrowl M.E."/>
            <person name="Ellington A.E."/>
            <person name="Evans K.A."/>
            <person name="Faulkner L."/>
            <person name="Francis M.D."/>
            <person name="Frankish A."/>
            <person name="Frankland J."/>
            <person name="French L."/>
            <person name="Garner P."/>
            <person name="Garnett J."/>
            <person name="Ghori M.J."/>
            <person name="Gilby L.M."/>
            <person name="Gillson C.J."/>
            <person name="Glithero R.J."/>
            <person name="Grafham D.V."/>
            <person name="Grant M."/>
            <person name="Gribble S."/>
            <person name="Griffiths C."/>
            <person name="Griffiths M.N.D."/>
            <person name="Hall R."/>
            <person name="Halls K.S."/>
            <person name="Hammond S."/>
            <person name="Harley J.L."/>
            <person name="Hart E.A."/>
            <person name="Heath P.D."/>
            <person name="Heathcott R."/>
            <person name="Holmes S.J."/>
            <person name="Howden P.J."/>
            <person name="Howe K.L."/>
            <person name="Howell G.R."/>
            <person name="Huckle E."/>
            <person name="Humphray S.J."/>
            <person name="Humphries M.D."/>
            <person name="Hunt A.R."/>
            <person name="Johnson C.M."/>
            <person name="Joy A.A."/>
            <person name="Kay M."/>
            <person name="Keenan S.J."/>
            <person name="Kimberley A.M."/>
            <person name="King A."/>
            <person name="Laird G.K."/>
            <person name="Langford C."/>
            <person name="Lawlor S."/>
            <person name="Leongamornlert D.A."/>
            <person name="Leversha M."/>
            <person name="Lloyd C.R."/>
            <person name="Lloyd D.M."/>
            <person name="Loveland J.E."/>
            <person name="Lovell J."/>
            <person name="Martin S."/>
            <person name="Mashreghi-Mohammadi M."/>
            <person name="Maslen G.L."/>
            <person name="Matthews L."/>
            <person name="McCann O.T."/>
            <person name="McLaren S.J."/>
            <person name="McLay K."/>
            <person name="McMurray A."/>
            <person name="Moore M.J.F."/>
            <person name="Mullikin J.C."/>
            <person name="Niblett D."/>
            <person name="Nickerson T."/>
            <person name="Novik K.L."/>
            <person name="Oliver K."/>
            <person name="Overton-Larty E.K."/>
            <person name="Parker A."/>
            <person name="Patel R."/>
            <person name="Pearce A.V."/>
            <person name="Peck A.I."/>
            <person name="Phillimore B.J.C.T."/>
            <person name="Phillips S."/>
            <person name="Plumb R.W."/>
            <person name="Porter K.M."/>
            <person name="Ramsey Y."/>
            <person name="Ranby S.A."/>
            <person name="Rice C.M."/>
            <person name="Ross M.T."/>
            <person name="Searle S.M."/>
            <person name="Sehra H.K."/>
            <person name="Sheridan E."/>
            <person name="Skuce C.D."/>
            <person name="Smith S."/>
            <person name="Smith M."/>
            <person name="Spraggon L."/>
            <person name="Squares S.L."/>
            <person name="Steward C.A."/>
            <person name="Sycamore N."/>
            <person name="Tamlyn-Hall G."/>
            <person name="Tester J."/>
            <person name="Theaker A.J."/>
            <person name="Thomas D.W."/>
            <person name="Thorpe A."/>
            <person name="Tracey A."/>
            <person name="Tromans A."/>
            <person name="Tubby B."/>
            <person name="Wall M."/>
            <person name="Wallis J.M."/>
            <person name="West A.P."/>
            <person name="White S.S."/>
            <person name="Whitehead S.L."/>
            <person name="Whittaker H."/>
            <person name="Wild A."/>
            <person name="Willey D.J."/>
            <person name="Wilmer T.E."/>
            <person name="Wood J.M."/>
            <person name="Wray P.W."/>
            <person name="Wyatt J.C."/>
            <person name="Young L."/>
            <person name="Younger R.M."/>
            <person name="Bentley D.R."/>
            <person name="Coulson A."/>
            <person name="Durbin R.M."/>
            <person name="Hubbard T."/>
            <person name="Sulston J.E."/>
            <person name="Dunham I."/>
            <person name="Rogers J."/>
            <person name="Beck S."/>
        </authorList>
    </citation>
    <scope>NUCLEOTIDE SEQUENCE [LARGE SCALE GENOMIC DNA]</scope>
</reference>
<reference key="4">
    <citation type="submission" date="2005-07" db="EMBL/GenBank/DDBJ databases">
        <authorList>
            <person name="Mural R.J."/>
            <person name="Istrail S."/>
            <person name="Sutton G.G."/>
            <person name="Florea L."/>
            <person name="Halpern A.L."/>
            <person name="Mobarry C.M."/>
            <person name="Lippert R."/>
            <person name="Walenz B."/>
            <person name="Shatkay H."/>
            <person name="Dew I."/>
            <person name="Miller J.R."/>
            <person name="Flanigan M.J."/>
            <person name="Edwards N.J."/>
            <person name="Bolanos R."/>
            <person name="Fasulo D."/>
            <person name="Halldorsson B.V."/>
            <person name="Hannenhalli S."/>
            <person name="Turner R."/>
            <person name="Yooseph S."/>
            <person name="Lu F."/>
            <person name="Nusskern D.R."/>
            <person name="Shue B.C."/>
            <person name="Zheng X.H."/>
            <person name="Zhong F."/>
            <person name="Delcher A.L."/>
            <person name="Huson D.H."/>
            <person name="Kravitz S.A."/>
            <person name="Mouchard L."/>
            <person name="Reinert K."/>
            <person name="Remington K.A."/>
            <person name="Clark A.G."/>
            <person name="Waterman M.S."/>
            <person name="Eichler E.E."/>
            <person name="Adams M.D."/>
            <person name="Hunkapiller M.W."/>
            <person name="Myers E.W."/>
            <person name="Venter J.C."/>
        </authorList>
    </citation>
    <scope>NUCLEOTIDE SEQUENCE [LARGE SCALE GENOMIC DNA]</scope>
</reference>
<reference key="5">
    <citation type="journal article" date="2004" name="Genome Res.">
        <title>The status, quality, and expansion of the NIH full-length cDNA project: the Mammalian Gene Collection (MGC).</title>
        <authorList>
            <consortium name="The MGC Project Team"/>
        </authorList>
    </citation>
    <scope>NUCLEOTIDE SEQUENCE [LARGE SCALE MRNA]</scope>
</reference>
<reference key="6">
    <citation type="journal article" date="2004" name="Genes Dev.">
        <title>Nucleosomal histone kinase-1 phosphorylates H2A Thr 119 during mitosis in the early Drosophila embryo.</title>
        <authorList>
            <person name="Aihara H."/>
            <person name="Nakagawa T."/>
            <person name="Yasui K."/>
            <person name="Ohta T."/>
            <person name="Hirose S."/>
            <person name="Dhomae N."/>
            <person name="Takio K."/>
            <person name="Kaneko M."/>
            <person name="Takeshima Y."/>
            <person name="Muramatsu M."/>
            <person name="Ito T."/>
        </authorList>
    </citation>
    <scope>PHOSPHORYLATION AT THR-121</scope>
</reference>
<reference key="7">
    <citation type="journal article" date="2004" name="J. Biol. Chem.">
        <title>Phosphorylation of histone H2A inhibits transcription on chromatin templates.</title>
        <authorList>
            <person name="Zhang Y."/>
            <person name="Griffin K."/>
            <person name="Mondal N."/>
            <person name="Parvin J.D."/>
        </authorList>
    </citation>
    <scope>PHOSPHORYLATION AT SER-2</scope>
    <scope>MUTAGENESIS OF SER-2</scope>
</reference>
<reference key="8">
    <citation type="journal article" date="2004" name="Nature">
        <title>Role of histone H2A ubiquitination in Polycomb silencing.</title>
        <authorList>
            <person name="Wang H."/>
            <person name="Wang L."/>
            <person name="Erdjument-Bromage H."/>
            <person name="Vidal M."/>
            <person name="Tempst P."/>
            <person name="Jones R.S."/>
            <person name="Zhang Y."/>
        </authorList>
    </citation>
    <scope>UBIQUITINATION AT LYS-120</scope>
</reference>
<reference key="9">
    <citation type="journal article" date="2005" name="Biochemistry">
        <title>Deimination of histone H2A and H4 at arginine 3 in HL-60 granulocytes.</title>
        <authorList>
            <person name="Hagiwara T."/>
            <person name="Hidaka Y."/>
            <person name="Yamada M."/>
        </authorList>
    </citation>
    <scope>ACETYLATION AT SER-2</scope>
    <scope>CITRULLINATION AT ARG-4</scope>
    <scope>IDENTIFICATION BY MASS SPECTROMETRY</scope>
</reference>
<reference key="10">
    <citation type="journal article" date="2005" name="Mol. Cell">
        <title>Role of Bmi-1 and Ring1A in H2A ubiquitylation and Hox gene silencing.</title>
        <authorList>
            <person name="Cao R."/>
            <person name="Tsukada Y."/>
            <person name="Zhang Y."/>
        </authorList>
    </citation>
    <scope>UBIQUITINATION AT LYS-120</scope>
</reference>
<reference key="11">
    <citation type="journal article" date="2006" name="Genes Dev.">
        <title>DNA damage triggers nucleotide excision repair-dependent monoubiquitylation of histone H2A.</title>
        <authorList>
            <person name="Bergink S."/>
            <person name="Salomons F.A."/>
            <person name="Hoogstraten D."/>
            <person name="Groothuis T.A.M."/>
            <person name="de Waard H."/>
            <person name="Wu J."/>
            <person name="Yuan L."/>
            <person name="Citterio E."/>
            <person name="Houtsmuller A.B."/>
            <person name="Neefjes J."/>
            <person name="Hoeijmakers J.H.J."/>
            <person name="Vermeulen W."/>
            <person name="Dantuma N.P."/>
        </authorList>
    </citation>
    <scope>UBIQUITINATION AT LYS-120</scope>
</reference>
<reference key="12">
    <citation type="journal article" date="2006" name="J. Proteome Res.">
        <title>Precise characterization of human histones in the H2A gene family by top down mass spectrometry.</title>
        <authorList>
            <person name="Boyne M.T. II"/>
            <person name="Pesavento J.J."/>
            <person name="Mizzen C.A."/>
            <person name="Kelleher N.L."/>
        </authorList>
    </citation>
    <scope>MASS SPECTROMETRY</scope>
    <scope>ACETYLATION AT SER-2</scope>
</reference>
<reference key="13">
    <citation type="journal article" date="2006" name="Mol. Cell. Proteomics">
        <title>Characterization of histones H2A and H2B variants and their post-translational modifications by mass spectrometry.</title>
        <authorList>
            <person name="Bonenfant D."/>
            <person name="Coulot M."/>
            <person name="Towbin H."/>
            <person name="Schindler P."/>
            <person name="van Oostrum J."/>
        </authorList>
    </citation>
    <scope>IDENTIFICATION BY MASS SPECTROMETRY [LARGE SCALE ANALYSIS]</scope>
</reference>
<reference key="14">
    <citation type="journal article" date="2007" name="Cell">
        <title>RNF8 ubiquitylates histones at DNA double-strand breaks and promotes assembly of repair proteins.</title>
        <authorList>
            <person name="Mailand N."/>
            <person name="Bekker-Jensen S."/>
            <person name="Faustrup H."/>
            <person name="Melander F."/>
            <person name="Bartek J."/>
            <person name="Lukas C."/>
            <person name="Lukas J."/>
        </authorList>
    </citation>
    <scope>UBIQUITINATION</scope>
</reference>
<reference key="15">
    <citation type="journal article" date="2007" name="Cell">
        <title>RNF8 transduces the DNA-damage signal via histone ubiquitylation and checkpoint protein assembly.</title>
        <authorList>
            <person name="Huen M.S.Y."/>
            <person name="Grant R."/>
            <person name="Manke I."/>
            <person name="Minn K."/>
            <person name="Yu X."/>
            <person name="Yaffe M.B."/>
            <person name="Chen J."/>
        </authorList>
    </citation>
    <scope>UBIQUITINATION</scope>
</reference>
<reference key="16">
    <citation type="journal article" date="2009" name="Cell">
        <title>The RIDDLE syndrome protein mediates a ubiquitin-dependent signaling cascade at sites of DNA damage.</title>
        <authorList>
            <person name="Stewart G.S."/>
            <person name="Panier S."/>
            <person name="Townsend K."/>
            <person name="Al-Hakim A.K."/>
            <person name="Kolas N.K."/>
            <person name="Miller E.S."/>
            <person name="Nakada S."/>
            <person name="Ylanko J."/>
            <person name="Olivarius S."/>
            <person name="Mendez M."/>
            <person name="Oldreive C."/>
            <person name="Wildenhain J."/>
            <person name="Tagliaferro A."/>
            <person name="Pelletier L."/>
            <person name="Taubenheim N."/>
            <person name="Durandy A."/>
            <person name="Byrd P.J."/>
            <person name="Stankovic T."/>
            <person name="Taylor A.M.R."/>
            <person name="Durocher D."/>
        </authorList>
    </citation>
    <scope>UBIQUITINATION</scope>
</reference>
<reference key="17">
    <citation type="journal article" date="2009" name="Cell">
        <title>RNF168 binds and amplifies ubiquitin conjugates on damaged chromosomes to allow accumulation of repair proteins.</title>
        <authorList>
            <person name="Doil C."/>
            <person name="Mailand N."/>
            <person name="Bekker-Jensen S."/>
            <person name="Menard P."/>
            <person name="Larsen D.H."/>
            <person name="Pepperkok R."/>
            <person name="Ellenberg J."/>
            <person name="Panier S."/>
            <person name="Durocher D."/>
            <person name="Bartek J."/>
            <person name="Lukas J."/>
            <person name="Lukas C."/>
        </authorList>
    </citation>
    <scope>UBIQUITINATION</scope>
</reference>
<reference key="18">
    <citation type="journal article" date="2011" name="Cell">
        <title>Identification of 67 histone marks and histone lysine crotonylation as a new type of histone modification.</title>
        <authorList>
            <person name="Tan M."/>
            <person name="Luo H."/>
            <person name="Lee S."/>
            <person name="Jin F."/>
            <person name="Yang J.S."/>
            <person name="Montellier E."/>
            <person name="Buchou T."/>
            <person name="Cheng Z."/>
            <person name="Rousseaux S."/>
            <person name="Rajagopal N."/>
            <person name="Lu Z."/>
            <person name="Ye Z."/>
            <person name="Zhu Q."/>
            <person name="Wysocka J."/>
            <person name="Ye Y."/>
            <person name="Khochbin S."/>
            <person name="Ren B."/>
            <person name="Zhao Y."/>
        </authorList>
    </citation>
    <scope>CROTONYLATION AT LYS-37; LYS-119; LYS-120 AND LYS-126</scope>
</reference>
<reference key="19">
    <citation type="journal article" date="2012" name="Cell">
        <title>RNF168 ubiquitinates K13-15 on H2A/H2AX to drive DNA Damage signaling.</title>
        <authorList>
            <person name="Mattiroli F."/>
            <person name="Vissers J.H."/>
            <person name="van Dijk W.J."/>
            <person name="Ikpa P."/>
            <person name="Citterio E."/>
            <person name="Vermeulen W."/>
            <person name="Marteijn J.A."/>
            <person name="Sixma T.K."/>
        </authorList>
    </citation>
    <scope>UBIQUITINATION AT LYS-14 AND LYS-16 BY RNF168</scope>
</reference>
<reference key="20">
    <citation type="journal article" date="2012" name="Cell Cycle">
        <title>A novel ubiquitin mark at the N-terminal tail of histone H2As targeted by RNF168 ubiquitin ligase.</title>
        <authorList>
            <person name="Gatti M."/>
            <person name="Pinato S."/>
            <person name="Maspero E."/>
            <person name="Soffientini P."/>
            <person name="Polo S."/>
            <person name="Penengo L."/>
        </authorList>
    </citation>
    <scope>UBIQUITINATION AT LYS-14 AND LYS-16 BY RNF168</scope>
</reference>
<reference key="21">
    <citation type="journal article" date="2012" name="Mol. Cell. Proteomics">
        <title>Lysine succinylation and lysine malonylation in histones.</title>
        <authorList>
            <person name="Xie Z."/>
            <person name="Dai J."/>
            <person name="Dai L."/>
            <person name="Tan M."/>
            <person name="Cheng Z."/>
            <person name="Wu Y."/>
            <person name="Boeke J.D."/>
            <person name="Zhao Y."/>
        </authorList>
    </citation>
    <scope>SUCCINYLATION AT LYS-10 AND LYS-96</scope>
</reference>
<reference key="22">
    <citation type="journal article" date="2013" name="Mol. Cell">
        <title>VprBP has intrinsic kinase activity targeting histone H2A and represses gene transcription.</title>
        <authorList>
            <person name="Kim K."/>
            <person name="Kim J.M."/>
            <person name="Kim J.S."/>
            <person name="Choi J."/>
            <person name="Lee Y.S."/>
            <person name="Neamati N."/>
            <person name="Song J.S."/>
            <person name="Heo K."/>
            <person name="An W."/>
        </authorList>
    </citation>
    <scope>PHOSPHORYLATION AT THR-121</scope>
</reference>
<reference key="23">
    <citation type="journal article" date="2014" name="Nat. Chem. Biol.">
        <title>Lysine 2-hydroxyisobutyrylation is a widely distributed active histone mark.</title>
        <authorList>
            <person name="Dai L."/>
            <person name="Peng C."/>
            <person name="Montellier E."/>
            <person name="Lu Z."/>
            <person name="Chen Y."/>
            <person name="Ishii H."/>
            <person name="Debernardi A."/>
            <person name="Buchou T."/>
            <person name="Rousseaux S."/>
            <person name="Jin F."/>
            <person name="Sabari B.R."/>
            <person name="Deng Z."/>
            <person name="Allis C.D."/>
            <person name="Ren B."/>
            <person name="Khochbin S."/>
            <person name="Zhao Y."/>
        </authorList>
    </citation>
    <scope>HYDROXYBUTYRYLATION AT LYS-6; LYS-10; LYS-37; LYS-75; LYS-76; LYS-96 AND LYS-119</scope>
</reference>
<reference key="24">
    <citation type="journal article" date="2014" name="Nature">
        <title>Glutamine methylation in histone H2A is an RNA-polymerase-I-dedicated modification.</title>
        <authorList>
            <person name="Tessarz P."/>
            <person name="Santos-Rosa H."/>
            <person name="Robson S.C."/>
            <person name="Sylvestersen K.B."/>
            <person name="Nelson C.J."/>
            <person name="Nielsen M.L."/>
            <person name="Kouzarides T."/>
        </authorList>
    </citation>
    <scope>METHYLATION AT GLN-105</scope>
</reference>
<reference key="25">
    <citation type="journal article" date="2014" name="Nature">
        <title>TRIM37 is a new histone H2A ubiquitin ligase and breast cancer oncoprotein.</title>
        <authorList>
            <person name="Bhatnagar S."/>
            <person name="Gazin C."/>
            <person name="Chamberlain L."/>
            <person name="Ou J."/>
            <person name="Zhu X."/>
            <person name="Tushir J.S."/>
            <person name="Virbasius C.M."/>
            <person name="Lin L."/>
            <person name="Zhu L.J."/>
            <person name="Wajapeyee N."/>
            <person name="Green M.R."/>
        </authorList>
    </citation>
    <scope>UBIQUITINATION AT LYS-120</scope>
</reference>
<reference key="26">
    <citation type="journal article" date="2016" name="Genes Dev.">
        <title>USP51 deubiquitylates H2AK13,15ub and regulates DNA damage response.</title>
        <authorList>
            <person name="Wang Z."/>
            <person name="Zhang H."/>
            <person name="Liu J."/>
            <person name="Cheruiyot A."/>
            <person name="Lee J.H."/>
            <person name="Ordog T."/>
            <person name="Lou Z."/>
            <person name="You Z."/>
            <person name="Zhang Z."/>
        </authorList>
    </citation>
    <scope>DEUBIQUITINATION AT LYS-14 AND LYS-16 BY USP51</scope>
</reference>
<reference key="27">
    <citation type="journal article" date="2016" name="Mol. Cell">
        <title>Metabolic regulation of gene expression by histone lysine beta-hydroxybutyrylation.</title>
        <authorList>
            <person name="Xie Z."/>
            <person name="Zhang D."/>
            <person name="Chung D."/>
            <person name="Tang Z."/>
            <person name="Huang H."/>
            <person name="Dai L."/>
            <person name="Qi S."/>
            <person name="Li J."/>
            <person name="Colak G."/>
            <person name="Chen Y."/>
            <person name="Xia C."/>
            <person name="Peng C."/>
            <person name="Ruan H."/>
            <person name="Kirkey M."/>
            <person name="Wang D."/>
            <person name="Jensen L.M."/>
            <person name="Kwon O.K."/>
            <person name="Lee S."/>
            <person name="Pletcher S.D."/>
            <person name="Tan M."/>
            <person name="Lombard D.B."/>
            <person name="White K.P."/>
            <person name="Zhao H."/>
            <person name="Li J."/>
            <person name="Roeder R.G."/>
            <person name="Yang X."/>
            <person name="Zhao Y."/>
        </authorList>
    </citation>
    <scope>HYDROXYBUTYRYLATION AT LYS-10; LYS-14; LYS-37; LYS-96 AND LYS-119</scope>
</reference>
<reference key="28">
    <citation type="journal article" date="2019" name="Mol. Cell">
        <title>Glutarylation of histone H4 lysine 91 regulates chromatin dynamics.</title>
        <authorList>
            <person name="Bao X."/>
            <person name="Liu Z."/>
            <person name="Zhang W."/>
            <person name="Gladysz K."/>
            <person name="Fung Y.M.E."/>
            <person name="Tian G."/>
            <person name="Xiong Y."/>
            <person name="Wong J.W.H."/>
            <person name="Yuen K.W.Y."/>
            <person name="Li X.D."/>
        </authorList>
    </citation>
    <scope>GLUTARYLATION AT LYS-96; LYS-100; LYS-119; LYS-120 AND LYS-126</scope>
</reference>
<gene>
    <name evidence="27" type="primary">H2AC14</name>
    <name type="synonym">H2AFE</name>
    <name evidence="27" type="synonym">HIST1H2AJ</name>
</gene>
<accession>Q99878</accession>
<accession>A2RUU6</accession>
<accession>Q5JXQ5</accession>
<protein>
    <recommendedName>
        <fullName>Histone H2A type 1-J</fullName>
    </recommendedName>
    <alternativeName>
        <fullName>Histone H2A/e</fullName>
    </alternativeName>
</protein>
<comment type="function">
    <text>Core component of nucleosome. Nucleosomes wrap and compact DNA into chromatin, limiting DNA accessibility to the cellular machineries which require DNA as a template. Histones thereby play a central role in transcription regulation, DNA repair, DNA replication and chromosomal stability. DNA accessibility is regulated via a complex set of post-translational modifications of histones, also called histone code, and nucleosome remodeling.</text>
</comment>
<comment type="subunit">
    <text>The nucleosome is a histone octamer containing two molecules each of H2A, H2B, H3 and H4 assembled in one H3-H4 heterotetramer and two H2A-H2B heterodimers. The octamer wraps approximately 147 bp of DNA.</text>
</comment>
<comment type="interaction">
    <interactant intactId="EBI-6147676">
        <id>Q99878</id>
    </interactant>
    <interactant intactId="EBI-725224">
        <id>P07305</id>
        <label>H1-0</label>
    </interactant>
    <organismsDiffer>false</organismsDiffer>
    <experiments>2</experiments>
</comment>
<comment type="interaction">
    <interactant intactId="EBI-6147676">
        <id>Q99878</id>
    </interactant>
    <interactant intactId="EBI-1056125">
        <id>Q16778</id>
        <label>H2BC21</label>
    </interactant>
    <organismsDiffer>false</organismsDiffer>
    <experiments>2</experiments>
</comment>
<comment type="subcellular location">
    <subcellularLocation>
        <location>Nucleus</location>
    </subcellularLocation>
    <subcellularLocation>
        <location>Chromosome</location>
    </subcellularLocation>
</comment>
<comment type="PTM">
    <text evidence="7">Deiminated on Arg-4 in granulocytes upon calcium entry.</text>
</comment>
<comment type="PTM">
    <text evidence="6 8 10 11 12 13 14 17 18 20 22 23">Monoubiquitination of Lys-120 (H2AK119Ub) by RING1, TRIM37 and RNF2/RING2 complex gives a specific tag for epigenetic transcriptional repression and participates in X chromosome inactivation of female mammals. It is involved in the initiation of both imprinted and random X inactivation. Ubiquitinated H2A is enriched in inactive X chromosome chromatin. Ubiquitination of H2A functions downstream of methylation of 'Lys-27' of histone H3 (H3K27me). H2AK119Ub by RNF2/RING2 can also be induced by ultraviolet and may be involved in DNA repair. Monoubiquitination of Lys-120 (H2AK119Ub) by TRIM37 may promote transformation of cells in a number of breast cancers (PubMed:25470042). Following DNA double-strand breaks (DSBs), it is ubiquitinated through 'Lys-63' linkage of ubiquitin moieties by the E2 ligase UBE2N and the E3 ligases RNF8 and RNF168, leading to the recruitment of repair proteins to sites of DNA damage. Ubiquitination at Lys-14 and Lys-16 (H2AK13Ub and H2AK15Ub, respectively) in response to DNA damage is initiated by RNF168 that mediates monoubiquitination at these 2 sites, and 'Lys-63'-linked ubiquitin are then conjugated to monoubiquitin; RNF8 is able to extend 'Lys-63'-linked ubiquitin chains in vitro. Deubiquitinated by USP51 at Lys-14 and Lys-16 (H2AK13Ub and H2AK15Ub, respectively) after damaged DNA is repaired (PubMed:27083998). H2AK119Ub and ionizing radiation-induced 'Lys-63'-linked ubiquitination (H2AK13Ub and H2AK15Ub) are distinct events.</text>
</comment>
<comment type="PTM">
    <text evidence="4 5 7 9 19">Phosphorylation on Ser-2 (H2AS1ph) is enhanced during mitosis. Phosphorylation on Ser-2 by RPS6KA5/MSK1 directly represses transcription. Acetylation of H3 inhibits Ser-2 phosphorylation by RPS6KA5/MSK1. Phosphorylation at Thr-121 (H2AT120ph) by DCAF1 is present in the regulatory region of many tumor suppresor genes and down-regulates their transcription.</text>
</comment>
<comment type="PTM">
    <text evidence="20">Glutamine methylation at Gln-105 (H2AQ104me) by FBL is specifically dedicated to polymerase I. It is present at 35S ribosomal DNA locus and impairs binding of the FACT complex (PubMed:24352239).</text>
</comment>
<comment type="PTM">
    <text evidence="2">Symmetric dimethylation on Arg-4 by the PRDM1/PRMT5 complex may play a crucial role in the germ-cell lineage.</text>
</comment>
<comment type="PTM">
    <text evidence="15">Crotonylation (Kcr) is specifically present in male germ cells and marks testis-specific genes in post-meiotic cells, including X-linked genes that escape sex chromosome inactivation in haploid cells. Crotonylation marks active promoters and enhancers and confers resistance to transcriptional repressors. It is also associated with post-meiotically activated genes on autosomes.</text>
</comment>
<comment type="PTM">
    <text evidence="1">Lactylated in macrophages by EP300/P300 by using lactoyl-CoA directly derived from endogenous or exogenous lactate, leading to stimulates gene transcription.</text>
</comment>
<comment type="mass spectrometry">
    <text>Monoisotopic with N-acetylserine.</text>
</comment>
<comment type="similarity">
    <text evidence="26">Belongs to the histone H2A family.</text>
</comment>
<feature type="initiator methionine" description="Removed" evidence="7 9">
    <location>
        <position position="1"/>
    </location>
</feature>
<feature type="chain" id="PRO_0000055239" description="Histone H2A type 1-J">
    <location>
        <begin position="2"/>
        <end position="128"/>
    </location>
</feature>
<feature type="region of interest" description="Disordered" evidence="3">
    <location>
        <begin position="1"/>
        <end position="22"/>
    </location>
</feature>
<feature type="compositionally biased region" description="Basic residues" evidence="3">
    <location>
        <begin position="7"/>
        <end position="19"/>
    </location>
</feature>
<feature type="modified residue" description="N-acetylserine" evidence="7 9">
    <location>
        <position position="2"/>
    </location>
</feature>
<feature type="modified residue" description="Phosphoserine; by RPS6KA5" evidence="4">
    <location>
        <position position="2"/>
    </location>
</feature>
<feature type="modified residue" description="Citrulline; alternate" evidence="7">
    <location>
        <position position="4"/>
    </location>
</feature>
<feature type="modified residue" description="Symmetric dimethylarginine; by PRMT5; alternate" evidence="2">
    <location>
        <position position="4"/>
    </location>
</feature>
<feature type="modified residue" description="N6-(2-hydroxyisobutyryl)lysine" evidence="21">
    <location>
        <position position="6"/>
    </location>
</feature>
<feature type="modified residue" description="N6-(2-hydroxyisobutyryl)lysine; alternate" evidence="21">
    <location>
        <position position="10"/>
    </location>
</feature>
<feature type="modified residue" description="N6-(beta-hydroxybutyryl)lysine; alternate" evidence="24">
    <location>
        <position position="10"/>
    </location>
</feature>
<feature type="modified residue" description="N6-lactoyllysine; alternate" evidence="1">
    <location>
        <position position="10"/>
    </location>
</feature>
<feature type="modified residue" description="N6-succinyllysine; alternate" evidence="16">
    <location>
        <position position="10"/>
    </location>
</feature>
<feature type="modified residue" description="N6-(beta-hydroxybutyryl)lysine; alternate" evidence="24">
    <location>
        <position position="14"/>
    </location>
</feature>
<feature type="modified residue" description="N6-(2-hydroxyisobutyryl)lysine; alternate" evidence="21">
    <location>
        <position position="37"/>
    </location>
</feature>
<feature type="modified residue" description="N6-(beta-hydroxybutyryl)lysine; alternate" evidence="24">
    <location>
        <position position="37"/>
    </location>
</feature>
<feature type="modified residue" description="N6-crotonyllysine; alternate" evidence="15">
    <location>
        <position position="37"/>
    </location>
</feature>
<feature type="modified residue" description="N6-(2-hydroxyisobutyryl)lysine" evidence="21">
    <location>
        <position position="75"/>
    </location>
</feature>
<feature type="modified residue" description="N6-(2-hydroxyisobutyryl)lysine" evidence="21">
    <location>
        <position position="76"/>
    </location>
</feature>
<feature type="modified residue" description="N6-(2-hydroxyisobutyryl)lysine; alternate" evidence="21">
    <location>
        <position position="96"/>
    </location>
</feature>
<feature type="modified residue" description="N6-(beta-hydroxybutyryl)lysine; alternate" evidence="24">
    <location>
        <position position="96"/>
    </location>
</feature>
<feature type="modified residue" description="N6-glutaryllysine; alternate" evidence="25">
    <location>
        <position position="96"/>
    </location>
</feature>
<feature type="modified residue" description="N6-succinyllysine; alternate" evidence="16">
    <location>
        <position position="96"/>
    </location>
</feature>
<feature type="modified residue" description="N6-glutaryllysine" evidence="25">
    <location>
        <position position="100"/>
    </location>
</feature>
<feature type="modified residue" description="N5-methylglutamine" evidence="20">
    <location>
        <position position="105"/>
    </location>
</feature>
<feature type="modified residue" description="N6-(2-hydroxyisobutyryl)lysine; alternate" evidence="21">
    <location>
        <position position="119"/>
    </location>
</feature>
<feature type="modified residue" description="N6-(beta-hydroxybutyryl)lysine; alternate" evidence="24">
    <location>
        <position position="119"/>
    </location>
</feature>
<feature type="modified residue" description="N6-crotonyllysine; alternate" evidence="15">
    <location>
        <position position="119"/>
    </location>
</feature>
<feature type="modified residue" description="N6-glutaryllysine; alternate" evidence="25">
    <location>
        <position position="119"/>
    </location>
</feature>
<feature type="modified residue" description="N6-crotonyllysine; alternate" evidence="15">
    <location>
        <position position="120"/>
    </location>
</feature>
<feature type="modified residue" description="N6-glutaryllysine; alternate" evidence="25">
    <location>
        <position position="120"/>
    </location>
</feature>
<feature type="modified residue" description="Phosphothreonine; by DCAF1" evidence="5 19">
    <location>
        <position position="121"/>
    </location>
</feature>
<feature type="modified residue" description="N6-crotonyllysine; alternate" evidence="15">
    <location>
        <position position="126"/>
    </location>
</feature>
<feature type="modified residue" description="N6-glutaryllysine; alternate" evidence="25">
    <location>
        <position position="126"/>
    </location>
</feature>
<feature type="cross-link" description="Glycyl lysine isopeptide (Lys-Gly) (interchain with G-Cter in ubiquitin); alternate" evidence="17 18">
    <location>
        <position position="14"/>
    </location>
</feature>
<feature type="cross-link" description="Glycyl lysine isopeptide (Lys-Gly) (interchain with G-Cter in ubiquitin)" evidence="17 18">
    <location>
        <position position="16"/>
    </location>
</feature>
<feature type="cross-link" description="Glycyl lysine isopeptide (Lys-Gly) (interchain with G-Cter in ubiquitin); alternate" evidence="6 8 10 22">
    <location>
        <position position="120"/>
    </location>
</feature>
<feature type="mutagenesis site" description="Blocks the inhibition of transcription by RPS6KA5/MSK1." evidence="4">
    <original>S</original>
    <variation>A</variation>
    <location>
        <position position="2"/>
    </location>
</feature>
<feature type="helix" evidence="28">
    <location>
        <begin position="18"/>
        <end position="22"/>
    </location>
</feature>
<feature type="helix" evidence="28">
    <location>
        <begin position="28"/>
        <end position="37"/>
    </location>
</feature>
<feature type="strand" evidence="28">
    <location>
        <begin position="42"/>
        <end position="44"/>
    </location>
</feature>
<feature type="helix" evidence="28">
    <location>
        <begin position="48"/>
        <end position="73"/>
    </location>
</feature>
<feature type="strand" evidence="28">
    <location>
        <begin position="77"/>
        <end position="79"/>
    </location>
</feature>
<feature type="helix" evidence="28">
    <location>
        <begin position="81"/>
        <end position="88"/>
    </location>
</feature>
<feature type="helix" evidence="28">
    <location>
        <begin position="94"/>
        <end position="97"/>
    </location>
</feature>
<feature type="helix" evidence="28">
    <location>
        <begin position="114"/>
        <end position="116"/>
    </location>
</feature>
<evidence type="ECO:0000250" key="1">
    <source>
        <dbReference type="UniProtKB" id="P0C0S5"/>
    </source>
</evidence>
<evidence type="ECO:0000250" key="2">
    <source>
        <dbReference type="UniProtKB" id="P22752"/>
    </source>
</evidence>
<evidence type="ECO:0000256" key="3">
    <source>
        <dbReference type="SAM" id="MobiDB-lite"/>
    </source>
</evidence>
<evidence type="ECO:0000269" key="4">
    <source>
    </source>
</evidence>
<evidence type="ECO:0000269" key="5">
    <source>
    </source>
</evidence>
<evidence type="ECO:0000269" key="6">
    <source>
    </source>
</evidence>
<evidence type="ECO:0000269" key="7">
    <source>
    </source>
</evidence>
<evidence type="ECO:0000269" key="8">
    <source>
    </source>
</evidence>
<evidence type="ECO:0000269" key="9">
    <source>
    </source>
</evidence>
<evidence type="ECO:0000269" key="10">
    <source>
    </source>
</evidence>
<evidence type="ECO:0000269" key="11">
    <source>
    </source>
</evidence>
<evidence type="ECO:0000269" key="12">
    <source>
    </source>
</evidence>
<evidence type="ECO:0000269" key="13">
    <source>
    </source>
</evidence>
<evidence type="ECO:0000269" key="14">
    <source>
    </source>
</evidence>
<evidence type="ECO:0000269" key="15">
    <source>
    </source>
</evidence>
<evidence type="ECO:0000269" key="16">
    <source>
    </source>
</evidence>
<evidence type="ECO:0000269" key="17">
    <source>
    </source>
</evidence>
<evidence type="ECO:0000269" key="18">
    <source>
    </source>
</evidence>
<evidence type="ECO:0000269" key="19">
    <source>
    </source>
</evidence>
<evidence type="ECO:0000269" key="20">
    <source>
    </source>
</evidence>
<evidence type="ECO:0000269" key="21">
    <source>
    </source>
</evidence>
<evidence type="ECO:0000269" key="22">
    <source>
    </source>
</evidence>
<evidence type="ECO:0000269" key="23">
    <source>
    </source>
</evidence>
<evidence type="ECO:0000269" key="24">
    <source>
    </source>
</evidence>
<evidence type="ECO:0000269" key="25">
    <source>
    </source>
</evidence>
<evidence type="ECO:0000305" key="26"/>
<evidence type="ECO:0000312" key="27">
    <source>
        <dbReference type="HGNC" id="HGNC:4727"/>
    </source>
</evidence>
<evidence type="ECO:0007829" key="28">
    <source>
        <dbReference type="PDB" id="8OL1"/>
    </source>
</evidence>
<proteinExistence type="evidence at protein level"/>
<sequence>MSGRGKQGGKARAKAKTRSSRAGLQFPVGRVHRLLRKGNYAERVGAGAPVYLAAVLEYLTAEILELAGNAARDNKKTRIIPRHLQLAIRNDEELNKLLGKVTIAQGGVLPNIQAVLLPKKTESHHKTK</sequence>
<name>H2A1J_HUMAN</name>
<keyword id="KW-0002">3D-structure</keyword>
<keyword id="KW-0007">Acetylation</keyword>
<keyword id="KW-0158">Chromosome</keyword>
<keyword id="KW-0164">Citrullination</keyword>
<keyword id="KW-0238">DNA-binding</keyword>
<keyword id="KW-0379">Hydroxylation</keyword>
<keyword id="KW-1017">Isopeptide bond</keyword>
<keyword id="KW-0488">Methylation</keyword>
<keyword id="KW-0544">Nucleosome core</keyword>
<keyword id="KW-0539">Nucleus</keyword>
<keyword id="KW-0597">Phosphoprotein</keyword>
<keyword id="KW-1185">Reference proteome</keyword>
<keyword id="KW-0832">Ubl conjugation</keyword>
<organism>
    <name type="scientific">Homo sapiens</name>
    <name type="common">Human</name>
    <dbReference type="NCBI Taxonomy" id="9606"/>
    <lineage>
        <taxon>Eukaryota</taxon>
        <taxon>Metazoa</taxon>
        <taxon>Chordata</taxon>
        <taxon>Craniata</taxon>
        <taxon>Vertebrata</taxon>
        <taxon>Euteleostomi</taxon>
        <taxon>Mammalia</taxon>
        <taxon>Eutheria</taxon>
        <taxon>Euarchontoglires</taxon>
        <taxon>Primates</taxon>
        <taxon>Haplorrhini</taxon>
        <taxon>Catarrhini</taxon>
        <taxon>Hominidae</taxon>
        <taxon>Homo</taxon>
    </lineage>
</organism>
<dbReference type="EMBL" id="Z83736">
    <property type="protein sequence ID" value="CAB06031.1"/>
    <property type="molecule type" value="Genomic_DNA"/>
</dbReference>
<dbReference type="EMBL" id="AY131990">
    <property type="protein sequence ID" value="AAN59971.1"/>
    <property type="molecule type" value="Genomic_DNA"/>
</dbReference>
<dbReference type="EMBL" id="AL049822">
    <property type="status" value="NOT_ANNOTATED_CDS"/>
    <property type="molecule type" value="Genomic_DNA"/>
</dbReference>
<dbReference type="EMBL" id="CH471081">
    <property type="protein sequence ID" value="EAX03109.1"/>
    <property type="molecule type" value="Genomic_DNA"/>
</dbReference>
<dbReference type="EMBL" id="BC066232">
    <property type="protein sequence ID" value="AAH66232.1"/>
    <property type="molecule type" value="mRNA"/>
</dbReference>
<dbReference type="EMBL" id="BC066233">
    <property type="protein sequence ID" value="AAH66233.1"/>
    <property type="molecule type" value="mRNA"/>
</dbReference>
<dbReference type="EMBL" id="BC066234">
    <property type="protein sequence ID" value="AAH66234.1"/>
    <property type="molecule type" value="mRNA"/>
</dbReference>
<dbReference type="EMBL" id="BC066235">
    <property type="protein sequence ID" value="AAH66235.1"/>
    <property type="molecule type" value="mRNA"/>
</dbReference>
<dbReference type="EMBL" id="BC066236">
    <property type="protein sequence ID" value="AAH66236.1"/>
    <property type="molecule type" value="mRNA"/>
</dbReference>
<dbReference type="EMBL" id="BC066237">
    <property type="protein sequence ID" value="AAH66237.1"/>
    <property type="molecule type" value="mRNA"/>
</dbReference>
<dbReference type="EMBL" id="BC133048">
    <property type="protein sequence ID" value="AAI33049.1"/>
    <property type="molecule type" value="mRNA"/>
</dbReference>
<dbReference type="EMBL" id="BC133050">
    <property type="protein sequence ID" value="AAI33051.1"/>
    <property type="molecule type" value="mRNA"/>
</dbReference>
<dbReference type="RefSeq" id="NP_066544.1">
    <property type="nucleotide sequence ID" value="NM_021066.3"/>
</dbReference>
<dbReference type="PDB" id="8OL1">
    <property type="method" value="EM"/>
    <property type="resolution" value="3.50 A"/>
    <property type="chains" value="G=11-117"/>
</dbReference>
<dbReference type="PDBsum" id="8OL1"/>
<dbReference type="EMDB" id="EMD-16936"/>
<dbReference type="SMR" id="Q99878"/>
<dbReference type="BioGRID" id="113927">
    <property type="interactions" value="146"/>
</dbReference>
<dbReference type="FunCoup" id="Q99878">
    <property type="interactions" value="634"/>
</dbReference>
<dbReference type="IntAct" id="Q99878">
    <property type="interactions" value="67"/>
</dbReference>
<dbReference type="MINT" id="Q99878"/>
<dbReference type="STRING" id="9606.ENSP00000328484"/>
<dbReference type="GlyGen" id="Q99878">
    <property type="glycosylation" value="1 site, 1 O-linked glycan (1 site)"/>
</dbReference>
<dbReference type="iPTMnet" id="Q99878"/>
<dbReference type="PhosphoSitePlus" id="Q99878"/>
<dbReference type="SwissPalm" id="Q99878"/>
<dbReference type="BioMuta" id="HIST1H2AJ"/>
<dbReference type="DMDM" id="12585257"/>
<dbReference type="jPOST" id="Q99878"/>
<dbReference type="MassIVE" id="Q99878"/>
<dbReference type="PaxDb" id="9606-ENSP00000328484"/>
<dbReference type="PeptideAtlas" id="Q99878"/>
<dbReference type="PRIDE" id="Q99878"/>
<dbReference type="ProteomicsDB" id="78515"/>
<dbReference type="Pumba" id="Q99878"/>
<dbReference type="TopDownProteomics" id="Q99878"/>
<dbReference type="Antibodypedia" id="74499">
    <property type="antibodies" value="15 antibodies from 4 providers"/>
</dbReference>
<dbReference type="DNASU" id="8331"/>
<dbReference type="Ensembl" id="ENST00000333151.5">
    <property type="protein sequence ID" value="ENSP00000328484.4"/>
    <property type="gene ID" value="ENSG00000276368.2"/>
</dbReference>
<dbReference type="GeneID" id="8331"/>
<dbReference type="KEGG" id="hsa:8331"/>
<dbReference type="MANE-Select" id="ENST00000333151.5">
    <property type="protein sequence ID" value="ENSP00000328484.4"/>
    <property type="RefSeq nucleotide sequence ID" value="NM_021066.3"/>
    <property type="RefSeq protein sequence ID" value="NP_066544.1"/>
</dbReference>
<dbReference type="UCSC" id="uc003njn.2">
    <property type="organism name" value="human"/>
</dbReference>
<dbReference type="AGR" id="HGNC:4727"/>
<dbReference type="CTD" id="8331"/>
<dbReference type="DisGeNET" id="8331"/>
<dbReference type="GeneCards" id="H2AC14"/>
<dbReference type="HGNC" id="HGNC:4727">
    <property type="gene designation" value="H2AC14"/>
</dbReference>
<dbReference type="HPA" id="ENSG00000276368">
    <property type="expression patterns" value="Tissue enriched (bone)"/>
</dbReference>
<dbReference type="MIM" id="602791">
    <property type="type" value="gene"/>
</dbReference>
<dbReference type="neXtProt" id="NX_Q99878"/>
<dbReference type="OpenTargets" id="ENSG00000276368"/>
<dbReference type="VEuPathDB" id="HostDB:ENSG00000276368"/>
<dbReference type="eggNOG" id="KOG1756">
    <property type="taxonomic scope" value="Eukaryota"/>
</dbReference>
<dbReference type="GeneTree" id="ENSGT00940000153125"/>
<dbReference type="HOGENOM" id="CLU_062828_3_3_1"/>
<dbReference type="InParanoid" id="Q99878"/>
<dbReference type="OMA" id="NHPLACK"/>
<dbReference type="OrthoDB" id="9829024at2759"/>
<dbReference type="PAN-GO" id="Q99878">
    <property type="GO annotations" value="1 GO annotation based on evolutionary models"/>
</dbReference>
<dbReference type="PhylomeDB" id="Q99878"/>
<dbReference type="TreeFam" id="TF300137"/>
<dbReference type="PathwayCommons" id="Q99878"/>
<dbReference type="Reactome" id="R-HSA-110328">
    <property type="pathway name" value="Recognition and association of DNA glycosylase with site containing an affected pyrimidine"/>
</dbReference>
<dbReference type="Reactome" id="R-HSA-110329">
    <property type="pathway name" value="Cleavage of the damaged pyrimidine"/>
</dbReference>
<dbReference type="Reactome" id="R-HSA-110330">
    <property type="pathway name" value="Recognition and association of DNA glycosylase with site containing an affected purine"/>
</dbReference>
<dbReference type="Reactome" id="R-HSA-110331">
    <property type="pathway name" value="Cleavage of the damaged purine"/>
</dbReference>
<dbReference type="Reactome" id="R-HSA-1221632">
    <property type="pathway name" value="Meiotic synapsis"/>
</dbReference>
<dbReference type="Reactome" id="R-HSA-171306">
    <property type="pathway name" value="Packaging Of Telomere Ends"/>
</dbReference>
<dbReference type="Reactome" id="R-HSA-1912408">
    <property type="pathway name" value="Pre-NOTCH Transcription and Translation"/>
</dbReference>
<dbReference type="Reactome" id="R-HSA-201722">
    <property type="pathway name" value="Formation of the beta-catenin:TCF transactivating complex"/>
</dbReference>
<dbReference type="Reactome" id="R-HSA-212300">
    <property type="pathway name" value="PRC2 methylates histones and DNA"/>
</dbReference>
<dbReference type="Reactome" id="R-HSA-2299718">
    <property type="pathway name" value="Condensation of Prophase Chromosomes"/>
</dbReference>
<dbReference type="Reactome" id="R-HSA-2559580">
    <property type="pathway name" value="Oxidative Stress Induced Senescence"/>
</dbReference>
<dbReference type="Reactome" id="R-HSA-2559582">
    <property type="pathway name" value="Senescence-Associated Secretory Phenotype (SASP)"/>
</dbReference>
<dbReference type="Reactome" id="R-HSA-2559586">
    <property type="pathway name" value="DNA Damage/Telomere Stress Induced Senescence"/>
</dbReference>
<dbReference type="Reactome" id="R-HSA-3214815">
    <property type="pathway name" value="HDACs deacetylate histones"/>
</dbReference>
<dbReference type="Reactome" id="R-HSA-3214847">
    <property type="pathway name" value="HATs acetylate histones"/>
</dbReference>
<dbReference type="Reactome" id="R-HSA-3214858">
    <property type="pathway name" value="RMTs methylate histone arginines"/>
</dbReference>
<dbReference type="Reactome" id="R-HSA-427359">
    <property type="pathway name" value="SIRT1 negatively regulates rRNA expression"/>
</dbReference>
<dbReference type="Reactome" id="R-HSA-427389">
    <property type="pathway name" value="ERCC6 (CSB) and EHMT2 (G9a) positively regulate rRNA expression"/>
</dbReference>
<dbReference type="Reactome" id="R-HSA-427413">
    <property type="pathway name" value="NoRC negatively regulates rRNA expression"/>
</dbReference>
<dbReference type="Reactome" id="R-HSA-5250924">
    <property type="pathway name" value="B-WICH complex positively regulates rRNA expression"/>
</dbReference>
<dbReference type="Reactome" id="R-HSA-5334118">
    <property type="pathway name" value="DNA methylation"/>
</dbReference>
<dbReference type="Reactome" id="R-HSA-5578749">
    <property type="pathway name" value="Transcriptional regulation by small RNAs"/>
</dbReference>
<dbReference type="Reactome" id="R-HSA-5617472">
    <property type="pathway name" value="Activation of anterior HOX genes in hindbrain development during early embryogenesis"/>
</dbReference>
<dbReference type="Reactome" id="R-HSA-5625886">
    <property type="pathway name" value="Activated PKN1 stimulates transcription of AR (androgen receptor) regulated genes KLK2 and KLK3"/>
</dbReference>
<dbReference type="Reactome" id="R-HSA-5689603">
    <property type="pathway name" value="UCH proteinases"/>
</dbReference>
<dbReference type="Reactome" id="R-HSA-5689880">
    <property type="pathway name" value="Ub-specific processing proteases"/>
</dbReference>
<dbReference type="Reactome" id="R-HSA-5689901">
    <property type="pathway name" value="Metalloprotease DUBs"/>
</dbReference>
<dbReference type="Reactome" id="R-HSA-606279">
    <property type="pathway name" value="Deposition of new CENPA-containing nucleosomes at the centromere"/>
</dbReference>
<dbReference type="Reactome" id="R-HSA-68616">
    <property type="pathway name" value="Assembly of the ORC complex at the origin of replication"/>
</dbReference>
<dbReference type="Reactome" id="R-HSA-73728">
    <property type="pathway name" value="RNA Polymerase I Promoter Opening"/>
</dbReference>
<dbReference type="Reactome" id="R-HSA-73772">
    <property type="pathway name" value="RNA Polymerase I Promoter Escape"/>
</dbReference>
<dbReference type="Reactome" id="R-HSA-8936459">
    <property type="pathway name" value="RUNX1 regulates genes involved in megakaryocyte differentiation and platelet function"/>
</dbReference>
<dbReference type="Reactome" id="R-HSA-8939236">
    <property type="pathway name" value="RUNX1 regulates transcription of genes involved in differentiation of HSCs"/>
</dbReference>
<dbReference type="Reactome" id="R-HSA-9018519">
    <property type="pathway name" value="Estrogen-dependent gene expression"/>
</dbReference>
<dbReference type="Reactome" id="R-HSA-912446">
    <property type="pathway name" value="Meiotic recombination"/>
</dbReference>
<dbReference type="Reactome" id="R-HSA-9609690">
    <property type="pathway name" value="HCMV Early Events"/>
</dbReference>
<dbReference type="Reactome" id="R-HSA-9610379">
    <property type="pathway name" value="HCMV Late Events"/>
</dbReference>
<dbReference type="Reactome" id="R-HSA-9616222">
    <property type="pathway name" value="Transcriptional regulation of granulopoiesis"/>
</dbReference>
<dbReference type="Reactome" id="R-HSA-9670095">
    <property type="pathway name" value="Inhibition of DNA recombination at telomere"/>
</dbReference>
<dbReference type="Reactome" id="R-HSA-9710421">
    <property type="pathway name" value="Defective pyroptosis"/>
</dbReference>
<dbReference type="Reactome" id="R-HSA-977225">
    <property type="pathway name" value="Amyloid fiber formation"/>
</dbReference>
<dbReference type="Reactome" id="R-HSA-9821002">
    <property type="pathway name" value="Chromatin modifications during the maternal to zygotic transition (MZT)"/>
</dbReference>
<dbReference type="Reactome" id="R-HSA-9841922">
    <property type="pathway name" value="MLL4 and MLL3 complexes regulate expression of PPARG target genes in adipogenesis and hepatic steatosis"/>
</dbReference>
<dbReference type="Reactome" id="R-HSA-9843940">
    <property type="pathway name" value="Regulation of endogenous retroelements by KRAB-ZFP proteins"/>
</dbReference>
<dbReference type="Reactome" id="R-HSA-9843970">
    <property type="pathway name" value="Regulation of endogenous retroelements by the Human Silencing Hub (HUSH) complex"/>
</dbReference>
<dbReference type="Reactome" id="R-HSA-9845323">
    <property type="pathway name" value="Regulation of endogenous retroelements by Piwi-interacting RNAs (piRNAs)"/>
</dbReference>
<dbReference type="SignaLink" id="Q99878"/>
<dbReference type="SIGNOR" id="Q99878"/>
<dbReference type="BioGRID-ORCS" id="8331">
    <property type="hits" value="449 hits in 1040 CRISPR screens"/>
</dbReference>
<dbReference type="CD-CODE" id="91857CE7">
    <property type="entry name" value="Nucleolus"/>
</dbReference>
<dbReference type="ChiTaRS" id="HIST1H2AJ">
    <property type="organism name" value="human"/>
</dbReference>
<dbReference type="GeneWiki" id="HIST1H2AJ"/>
<dbReference type="GenomeRNAi" id="8331"/>
<dbReference type="Pharos" id="Q99878">
    <property type="development level" value="Tdark"/>
</dbReference>
<dbReference type="PRO" id="PR:Q99878"/>
<dbReference type="Proteomes" id="UP000005640">
    <property type="component" value="Chromosome 6"/>
</dbReference>
<dbReference type="RNAct" id="Q99878">
    <property type="molecule type" value="protein"/>
</dbReference>
<dbReference type="Bgee" id="ENSG00000276368">
    <property type="expression patterns" value="Expressed in bone marrow cell and 75 other cell types or tissues"/>
</dbReference>
<dbReference type="GO" id="GO:0070062">
    <property type="term" value="C:extracellular exosome"/>
    <property type="evidence" value="ECO:0007005"/>
    <property type="project" value="UniProtKB"/>
</dbReference>
<dbReference type="GO" id="GO:0000786">
    <property type="term" value="C:nucleosome"/>
    <property type="evidence" value="ECO:0000318"/>
    <property type="project" value="GO_Central"/>
</dbReference>
<dbReference type="GO" id="GO:0005634">
    <property type="term" value="C:nucleus"/>
    <property type="evidence" value="ECO:0000314"/>
    <property type="project" value="UniProtKB"/>
</dbReference>
<dbReference type="GO" id="GO:0003677">
    <property type="term" value="F:DNA binding"/>
    <property type="evidence" value="ECO:0007669"/>
    <property type="project" value="UniProtKB-KW"/>
</dbReference>
<dbReference type="GO" id="GO:0046982">
    <property type="term" value="F:protein heterodimerization activity"/>
    <property type="evidence" value="ECO:0007669"/>
    <property type="project" value="InterPro"/>
</dbReference>
<dbReference type="GO" id="GO:0030527">
    <property type="term" value="F:structural constituent of chromatin"/>
    <property type="evidence" value="ECO:0000318"/>
    <property type="project" value="GO_Central"/>
</dbReference>
<dbReference type="GO" id="GO:0031507">
    <property type="term" value="P:heterochromatin formation"/>
    <property type="evidence" value="ECO:0000318"/>
    <property type="project" value="GO_Central"/>
</dbReference>
<dbReference type="CDD" id="cd00074">
    <property type="entry name" value="HFD_H2A"/>
    <property type="match status" value="1"/>
</dbReference>
<dbReference type="FunFam" id="1.10.20.10:FF:000103">
    <property type="entry name" value="Histone H2A type 1"/>
    <property type="match status" value="1"/>
</dbReference>
<dbReference type="Gene3D" id="1.10.20.10">
    <property type="entry name" value="Histone, subunit A"/>
    <property type="match status" value="1"/>
</dbReference>
<dbReference type="InterPro" id="IPR009072">
    <property type="entry name" value="Histone-fold"/>
</dbReference>
<dbReference type="InterPro" id="IPR002119">
    <property type="entry name" value="Histone_H2A"/>
</dbReference>
<dbReference type="InterPro" id="IPR007125">
    <property type="entry name" value="Histone_H2A/H2B/H3"/>
</dbReference>
<dbReference type="InterPro" id="IPR032454">
    <property type="entry name" value="Histone_H2A_C"/>
</dbReference>
<dbReference type="InterPro" id="IPR032458">
    <property type="entry name" value="Histone_H2A_CS"/>
</dbReference>
<dbReference type="PANTHER" id="PTHR23430">
    <property type="entry name" value="HISTONE H2A"/>
    <property type="match status" value="1"/>
</dbReference>
<dbReference type="Pfam" id="PF00125">
    <property type="entry name" value="Histone"/>
    <property type="match status" value="1"/>
</dbReference>
<dbReference type="Pfam" id="PF16211">
    <property type="entry name" value="Histone_H2A_C"/>
    <property type="match status" value="1"/>
</dbReference>
<dbReference type="PRINTS" id="PR00620">
    <property type="entry name" value="HISTONEH2A"/>
</dbReference>
<dbReference type="SMART" id="SM00414">
    <property type="entry name" value="H2A"/>
    <property type="match status" value="1"/>
</dbReference>
<dbReference type="SUPFAM" id="SSF47113">
    <property type="entry name" value="Histone-fold"/>
    <property type="match status" value="1"/>
</dbReference>
<dbReference type="PROSITE" id="PS00046">
    <property type="entry name" value="HISTONE_H2A"/>
    <property type="match status" value="1"/>
</dbReference>